<evidence type="ECO:0000250" key="1"/>
<evidence type="ECO:0000255" key="2"/>
<evidence type="ECO:0000305" key="3"/>
<feature type="chain" id="PRO_0000279735" description="L-cystine uptake protein TcyP">
    <location>
        <begin position="1"/>
        <end position="464"/>
    </location>
</feature>
<feature type="transmembrane region" description="Helical" evidence="2">
    <location>
        <begin position="3"/>
        <end position="23"/>
    </location>
</feature>
<feature type="transmembrane region" description="Helical" evidence="2">
    <location>
        <begin position="34"/>
        <end position="54"/>
    </location>
</feature>
<feature type="transmembrane region" description="Helical" evidence="2">
    <location>
        <begin position="73"/>
        <end position="93"/>
    </location>
</feature>
<feature type="transmembrane region" description="Helical" evidence="2">
    <location>
        <begin position="107"/>
        <end position="127"/>
    </location>
</feature>
<feature type="transmembrane region" description="Helical" evidence="2">
    <location>
        <begin position="184"/>
        <end position="204"/>
    </location>
</feature>
<feature type="transmembrane region" description="Helical" evidence="2">
    <location>
        <begin position="225"/>
        <end position="245"/>
    </location>
</feature>
<feature type="transmembrane region" description="Helical" evidence="2">
    <location>
        <begin position="263"/>
        <end position="283"/>
    </location>
</feature>
<feature type="transmembrane region" description="Helical" evidence="2">
    <location>
        <begin position="347"/>
        <end position="367"/>
    </location>
</feature>
<feature type="transmembrane region" description="Helical" evidence="2">
    <location>
        <begin position="371"/>
        <end position="391"/>
    </location>
</feature>
<feature type="transmembrane region" description="Helical" evidence="2">
    <location>
        <begin position="395"/>
        <end position="415"/>
    </location>
</feature>
<proteinExistence type="inferred from homology"/>
<name>TCYP_BACAN</name>
<sequence>MNTLLVGINVAVMLILVGVLYYMQRKHVSFNKRVFTALGIGIIFGLILQFIYEPTSKVIIESNTWFGLIGSGYVKLLQMIVMPLILVSIISAFTKLQLTKNLGKISGLIIGILILTTGIAAAVGIAASAGFDVSATGLQQGDAESARLKLVEERFTSIEKTTIPDKLLELLPTNPFLDLTGARPTSTISVVIFAAFIGIAFIGVKRKYPEQAELFKKMLDAVYAIVMRMVTLILRLTPYGVLALMAKTVAGSDINAILKLGNFVLASYVALIVMFVIHLLLIALSGLNPIQYLKKVFPVLTFAFTSRSSAGAMPLNIEAQKEKLGISEGIANFAASFGVSIGQNGCAGIYPAMLAMMVAPTVGIDPLQPQFILTLIAVVAISSFGVAGVGGGATFAALIVLSTMNLPIGIVALVISVEPLIDMGRTALNVSGSMTAGLISSKWLGELDQDTYNQDDTKTGEIAS</sequence>
<protein>
    <recommendedName>
        <fullName>L-cystine uptake protein TcyP</fullName>
    </recommendedName>
    <alternativeName>
        <fullName>Transporter of cystine TcyP</fullName>
    </alternativeName>
</protein>
<reference key="1">
    <citation type="journal article" date="2003" name="Nature">
        <title>The genome sequence of Bacillus anthracis Ames and comparison to closely related bacteria.</title>
        <authorList>
            <person name="Read T.D."/>
            <person name="Peterson S.N."/>
            <person name="Tourasse N.J."/>
            <person name="Baillie L.W."/>
            <person name="Paulsen I.T."/>
            <person name="Nelson K.E."/>
            <person name="Tettelin H."/>
            <person name="Fouts D.E."/>
            <person name="Eisen J.A."/>
            <person name="Gill S.R."/>
            <person name="Holtzapple E.K."/>
            <person name="Okstad O.A."/>
            <person name="Helgason E."/>
            <person name="Rilstone J."/>
            <person name="Wu M."/>
            <person name="Kolonay J.F."/>
            <person name="Beanan M.J."/>
            <person name="Dodson R.J."/>
            <person name="Brinkac L.M."/>
            <person name="Gwinn M.L."/>
            <person name="DeBoy R.T."/>
            <person name="Madpu R."/>
            <person name="Daugherty S.C."/>
            <person name="Durkin A.S."/>
            <person name="Haft D.H."/>
            <person name="Nelson W.C."/>
            <person name="Peterson J.D."/>
            <person name="Pop M."/>
            <person name="Khouri H.M."/>
            <person name="Radune D."/>
            <person name="Benton J.L."/>
            <person name="Mahamoud Y."/>
            <person name="Jiang L."/>
            <person name="Hance I.R."/>
            <person name="Weidman J.F."/>
            <person name="Berry K.J."/>
            <person name="Plaut R.D."/>
            <person name="Wolf A.M."/>
            <person name="Watkins K.L."/>
            <person name="Nierman W.C."/>
            <person name="Hazen A."/>
            <person name="Cline R.T."/>
            <person name="Redmond C."/>
            <person name="Thwaite J.E."/>
            <person name="White O."/>
            <person name="Salzberg S.L."/>
            <person name="Thomason B."/>
            <person name="Friedlander A.M."/>
            <person name="Koehler T.M."/>
            <person name="Hanna P.C."/>
            <person name="Kolstoe A.-B."/>
            <person name="Fraser C.M."/>
        </authorList>
    </citation>
    <scope>NUCLEOTIDE SEQUENCE [LARGE SCALE GENOMIC DNA]</scope>
    <source>
        <strain>Ames / isolate Porton</strain>
    </source>
</reference>
<reference key="2">
    <citation type="journal article" date="2009" name="J. Bacteriol.">
        <title>The complete genome sequence of Bacillus anthracis Ames 'Ancestor'.</title>
        <authorList>
            <person name="Ravel J."/>
            <person name="Jiang L."/>
            <person name="Stanley S.T."/>
            <person name="Wilson M.R."/>
            <person name="Decker R.S."/>
            <person name="Read T.D."/>
            <person name="Worsham P."/>
            <person name="Keim P.S."/>
            <person name="Salzberg S.L."/>
            <person name="Fraser-Liggett C.M."/>
            <person name="Rasko D.A."/>
        </authorList>
    </citation>
    <scope>NUCLEOTIDE SEQUENCE [LARGE SCALE GENOMIC DNA]</scope>
    <source>
        <strain>Ames ancestor</strain>
    </source>
</reference>
<reference key="3">
    <citation type="submission" date="2004-01" db="EMBL/GenBank/DDBJ databases">
        <title>Complete genome sequence of Bacillus anthracis Sterne.</title>
        <authorList>
            <person name="Brettin T.S."/>
            <person name="Bruce D."/>
            <person name="Challacombe J.F."/>
            <person name="Gilna P."/>
            <person name="Han C."/>
            <person name="Hill K."/>
            <person name="Hitchcock P."/>
            <person name="Jackson P."/>
            <person name="Keim P."/>
            <person name="Longmire J."/>
            <person name="Lucas S."/>
            <person name="Okinaka R."/>
            <person name="Richardson P."/>
            <person name="Rubin E."/>
            <person name="Tice H."/>
        </authorList>
    </citation>
    <scope>NUCLEOTIDE SEQUENCE [LARGE SCALE GENOMIC DNA]</scope>
    <source>
        <strain>Sterne</strain>
    </source>
</reference>
<comment type="function">
    <text evidence="1">Mediates uptake of L-cystine, the oxidized form of L-cysteine.</text>
</comment>
<comment type="subcellular location">
    <subcellularLocation>
        <location evidence="3">Membrane</location>
        <topology evidence="3">Multi-pass membrane protein</topology>
    </subcellularLocation>
</comment>
<comment type="similarity">
    <text evidence="3">Belongs to the dicarboxylate/amino acid:cation symporter (DAACS) (TC 2.A.23) family.</text>
</comment>
<keyword id="KW-0029">Amino-acid transport</keyword>
<keyword id="KW-0472">Membrane</keyword>
<keyword id="KW-1185">Reference proteome</keyword>
<keyword id="KW-0812">Transmembrane</keyword>
<keyword id="KW-1133">Transmembrane helix</keyword>
<keyword id="KW-0813">Transport</keyword>
<organism>
    <name type="scientific">Bacillus anthracis</name>
    <dbReference type="NCBI Taxonomy" id="1392"/>
    <lineage>
        <taxon>Bacteria</taxon>
        <taxon>Bacillati</taxon>
        <taxon>Bacillota</taxon>
        <taxon>Bacilli</taxon>
        <taxon>Bacillales</taxon>
        <taxon>Bacillaceae</taxon>
        <taxon>Bacillus</taxon>
        <taxon>Bacillus cereus group</taxon>
    </lineage>
</organism>
<accession>Q81LY8</accession>
<accession>Q6HTE1</accession>
<accession>Q6KMN3</accession>
<dbReference type="EMBL" id="AE016879">
    <property type="protein sequence ID" value="AAP28181.1"/>
    <property type="molecule type" value="Genomic_DNA"/>
</dbReference>
<dbReference type="EMBL" id="AE017334">
    <property type="protein sequence ID" value="AAT33587.1"/>
    <property type="molecule type" value="Genomic_DNA"/>
</dbReference>
<dbReference type="EMBL" id="AE017225">
    <property type="protein sequence ID" value="AAT56448.1"/>
    <property type="molecule type" value="Genomic_DNA"/>
</dbReference>
<dbReference type="RefSeq" id="NP_846695.1">
    <property type="nucleotide sequence ID" value="NC_003997.3"/>
</dbReference>
<dbReference type="RefSeq" id="WP_001094329.1">
    <property type="nucleotide sequence ID" value="NZ_WXXJ01000027.1"/>
</dbReference>
<dbReference type="RefSeq" id="YP_030397.1">
    <property type="nucleotide sequence ID" value="NC_005945.1"/>
</dbReference>
<dbReference type="SMR" id="Q81LY8"/>
<dbReference type="IntAct" id="Q81LY8">
    <property type="interactions" value="1"/>
</dbReference>
<dbReference type="STRING" id="261594.GBAA_4469"/>
<dbReference type="DNASU" id="1087914"/>
<dbReference type="GeneID" id="45024125"/>
<dbReference type="KEGG" id="ban:BA_4469"/>
<dbReference type="KEGG" id="banh:HYU01_21805"/>
<dbReference type="KEGG" id="bar:GBAA_4469"/>
<dbReference type="KEGG" id="bat:BAS4148"/>
<dbReference type="PATRIC" id="fig|198094.11.peg.4438"/>
<dbReference type="eggNOG" id="COG1823">
    <property type="taxonomic scope" value="Bacteria"/>
</dbReference>
<dbReference type="HOGENOM" id="CLU_019375_0_1_9"/>
<dbReference type="OMA" id="GIMFVVH"/>
<dbReference type="OrthoDB" id="7778689at2"/>
<dbReference type="Proteomes" id="UP000000427">
    <property type="component" value="Chromosome"/>
</dbReference>
<dbReference type="Proteomes" id="UP000000594">
    <property type="component" value="Chromosome"/>
</dbReference>
<dbReference type="GO" id="GO:0005886">
    <property type="term" value="C:plasma membrane"/>
    <property type="evidence" value="ECO:0007669"/>
    <property type="project" value="TreeGrafter"/>
</dbReference>
<dbReference type="GO" id="GO:0015184">
    <property type="term" value="F:L-cystine transmembrane transporter activity"/>
    <property type="evidence" value="ECO:0007669"/>
    <property type="project" value="TreeGrafter"/>
</dbReference>
<dbReference type="GO" id="GO:0015293">
    <property type="term" value="F:symporter activity"/>
    <property type="evidence" value="ECO:0007669"/>
    <property type="project" value="InterPro"/>
</dbReference>
<dbReference type="FunFam" id="1.10.3860.10:FF:000004">
    <property type="entry name" value="L-cystine transporter tcyP"/>
    <property type="match status" value="1"/>
</dbReference>
<dbReference type="Gene3D" id="1.10.3860.10">
    <property type="entry name" value="Sodium:dicarboxylate symporter"/>
    <property type="match status" value="1"/>
</dbReference>
<dbReference type="InterPro" id="IPR001991">
    <property type="entry name" value="Na-dicarboxylate_symporter"/>
</dbReference>
<dbReference type="InterPro" id="IPR036458">
    <property type="entry name" value="Na:dicarbo_symporter_sf"/>
</dbReference>
<dbReference type="PANTHER" id="PTHR42865:SF5">
    <property type="entry name" value="L-CYSTINE TRANSPORTER TCYP"/>
    <property type="match status" value="1"/>
</dbReference>
<dbReference type="PANTHER" id="PTHR42865">
    <property type="entry name" value="PROTON/GLUTAMATE-ASPARTATE SYMPORTER"/>
    <property type="match status" value="1"/>
</dbReference>
<dbReference type="Pfam" id="PF00375">
    <property type="entry name" value="SDF"/>
    <property type="match status" value="1"/>
</dbReference>
<dbReference type="PRINTS" id="PR00173">
    <property type="entry name" value="EDTRNSPORT"/>
</dbReference>
<dbReference type="SUPFAM" id="SSF118215">
    <property type="entry name" value="Proton glutamate symport protein"/>
    <property type="match status" value="1"/>
</dbReference>
<gene>
    <name type="ordered locus">BA_4469</name>
    <name type="ordered locus">GBAA_4469</name>
    <name type="ordered locus">BAS4148</name>
</gene>